<proteinExistence type="evidence at transcript level"/>
<organism>
    <name type="scientific">Arabidopsis thaliana</name>
    <name type="common">Mouse-ear cress</name>
    <dbReference type="NCBI Taxonomy" id="3702"/>
    <lineage>
        <taxon>Eukaryota</taxon>
        <taxon>Viridiplantae</taxon>
        <taxon>Streptophyta</taxon>
        <taxon>Embryophyta</taxon>
        <taxon>Tracheophyta</taxon>
        <taxon>Spermatophyta</taxon>
        <taxon>Magnoliopsida</taxon>
        <taxon>eudicotyledons</taxon>
        <taxon>Gunneridae</taxon>
        <taxon>Pentapetalae</taxon>
        <taxon>rosids</taxon>
        <taxon>malvids</taxon>
        <taxon>Brassicales</taxon>
        <taxon>Brassicaceae</taxon>
        <taxon>Camelineae</taxon>
        <taxon>Arabidopsis</taxon>
    </lineage>
</organism>
<evidence type="ECO:0000250" key="1"/>
<evidence type="ECO:0000255" key="2">
    <source>
        <dbReference type="PROSITE-ProRule" id="PRU00366"/>
    </source>
</evidence>
<evidence type="ECO:0000256" key="3">
    <source>
        <dbReference type="SAM" id="MobiDB-lite"/>
    </source>
</evidence>
<evidence type="ECO:0000305" key="4"/>
<sequence length="244" mass="26981">MVKQELKIQVTTSSSSLSHSSSSSSSSTSALRHQSCKNKIKKYKGVRMRSWGSWVTEIRAPNQKTRIWLGSYSTAEAAARAYDAALLCLKGPKANLNFPNITTTSPFLMNIDEKTLLSPKSIQKVAAQAANSSSDHFTPPSDENDHDHDDGLDHHPSASSSAASSPPDDDHHNDDDGDLVSLMESFVDYNEHVSLMDPSLYEFGHNEIFFTNGDPFDYSPQLHSSEATMDDFYDDVDIPLWSFS</sequence>
<feature type="chain" id="PRO_0000290375" description="Ethylene-responsive transcription factor ERF013">
    <location>
        <begin position="1"/>
        <end position="244"/>
    </location>
</feature>
<feature type="DNA-binding region" description="AP2/ERF" evidence="2">
    <location>
        <begin position="42"/>
        <end position="99"/>
    </location>
</feature>
<feature type="region of interest" description="Disordered" evidence="3">
    <location>
        <begin position="1"/>
        <end position="33"/>
    </location>
</feature>
<feature type="region of interest" description="Disordered" evidence="3">
    <location>
        <begin position="123"/>
        <end position="178"/>
    </location>
</feature>
<feature type="compositionally biased region" description="Low complexity" evidence="3">
    <location>
        <begin position="11"/>
        <end position="29"/>
    </location>
</feature>
<feature type="compositionally biased region" description="Basic and acidic residues" evidence="3">
    <location>
        <begin position="143"/>
        <end position="156"/>
    </location>
</feature>
<feature type="compositionally biased region" description="Low complexity" evidence="3">
    <location>
        <begin position="157"/>
        <end position="166"/>
    </location>
</feature>
<protein>
    <recommendedName>
        <fullName>Ethylene-responsive transcription factor ERF013</fullName>
    </recommendedName>
</protein>
<name>ERF13_ARATH</name>
<gene>
    <name type="primary">ERF013</name>
    <name type="ordered locus">At1g77640</name>
    <name type="ORF">T5M16.23</name>
</gene>
<reference key="1">
    <citation type="submission" date="2004-02" db="EMBL/GenBank/DDBJ databases">
        <title>Molecular cloning, expression, phylogenetic and functional characterization of the Arabidopsis AP2/EREBP transcription factor family.</title>
        <authorList>
            <person name="Pan Y."/>
            <person name="Gong W."/>
            <person name="Liu D."/>
            <person name="Fu Q."/>
            <person name="Mei W.-Q."/>
            <person name="Song W.-Q."/>
            <person name="Ma L.-G."/>
            <person name="Luo J.-C."/>
            <person name="Deng X.-W."/>
            <person name="Zhu Y.-X."/>
        </authorList>
    </citation>
    <scope>NUCLEOTIDE SEQUENCE [MRNA]</scope>
</reference>
<reference key="2">
    <citation type="journal article" date="2000" name="Nature">
        <title>Sequence and analysis of chromosome 1 of the plant Arabidopsis thaliana.</title>
        <authorList>
            <person name="Theologis A."/>
            <person name="Ecker J.R."/>
            <person name="Palm C.J."/>
            <person name="Federspiel N.A."/>
            <person name="Kaul S."/>
            <person name="White O."/>
            <person name="Alonso J."/>
            <person name="Altafi H."/>
            <person name="Araujo R."/>
            <person name="Bowman C.L."/>
            <person name="Brooks S.Y."/>
            <person name="Buehler E."/>
            <person name="Chan A."/>
            <person name="Chao Q."/>
            <person name="Chen H."/>
            <person name="Cheuk R.F."/>
            <person name="Chin C.W."/>
            <person name="Chung M.K."/>
            <person name="Conn L."/>
            <person name="Conway A.B."/>
            <person name="Conway A.R."/>
            <person name="Creasy T.H."/>
            <person name="Dewar K."/>
            <person name="Dunn P."/>
            <person name="Etgu P."/>
            <person name="Feldblyum T.V."/>
            <person name="Feng J.-D."/>
            <person name="Fong B."/>
            <person name="Fujii C.Y."/>
            <person name="Gill J.E."/>
            <person name="Goldsmith A.D."/>
            <person name="Haas B."/>
            <person name="Hansen N.F."/>
            <person name="Hughes B."/>
            <person name="Huizar L."/>
            <person name="Hunter J.L."/>
            <person name="Jenkins J."/>
            <person name="Johnson-Hopson C."/>
            <person name="Khan S."/>
            <person name="Khaykin E."/>
            <person name="Kim C.J."/>
            <person name="Koo H.L."/>
            <person name="Kremenetskaia I."/>
            <person name="Kurtz D.B."/>
            <person name="Kwan A."/>
            <person name="Lam B."/>
            <person name="Langin-Hooper S."/>
            <person name="Lee A."/>
            <person name="Lee J.M."/>
            <person name="Lenz C.A."/>
            <person name="Li J.H."/>
            <person name="Li Y.-P."/>
            <person name="Lin X."/>
            <person name="Liu S.X."/>
            <person name="Liu Z.A."/>
            <person name="Luros J.S."/>
            <person name="Maiti R."/>
            <person name="Marziali A."/>
            <person name="Militscher J."/>
            <person name="Miranda M."/>
            <person name="Nguyen M."/>
            <person name="Nierman W.C."/>
            <person name="Osborne B.I."/>
            <person name="Pai G."/>
            <person name="Peterson J."/>
            <person name="Pham P.K."/>
            <person name="Rizzo M."/>
            <person name="Rooney T."/>
            <person name="Rowley D."/>
            <person name="Sakano H."/>
            <person name="Salzberg S.L."/>
            <person name="Schwartz J.R."/>
            <person name="Shinn P."/>
            <person name="Southwick A.M."/>
            <person name="Sun H."/>
            <person name="Tallon L.J."/>
            <person name="Tambunga G."/>
            <person name="Toriumi M.J."/>
            <person name="Town C.D."/>
            <person name="Utterback T."/>
            <person name="Van Aken S."/>
            <person name="Vaysberg M."/>
            <person name="Vysotskaia V.S."/>
            <person name="Walker M."/>
            <person name="Wu D."/>
            <person name="Yu G."/>
            <person name="Fraser C.M."/>
            <person name="Venter J.C."/>
            <person name="Davis R.W."/>
        </authorList>
    </citation>
    <scope>NUCLEOTIDE SEQUENCE [LARGE SCALE GENOMIC DNA]</scope>
    <source>
        <strain>cv. Columbia</strain>
    </source>
</reference>
<reference key="3">
    <citation type="journal article" date="2017" name="Plant J.">
        <title>Araport11: a complete reannotation of the Arabidopsis thaliana reference genome.</title>
        <authorList>
            <person name="Cheng C.Y."/>
            <person name="Krishnakumar V."/>
            <person name="Chan A.P."/>
            <person name="Thibaud-Nissen F."/>
            <person name="Schobel S."/>
            <person name="Town C.D."/>
        </authorList>
    </citation>
    <scope>GENOME REANNOTATION</scope>
    <source>
        <strain>cv. Columbia</strain>
    </source>
</reference>
<reference key="4">
    <citation type="submission" date="2004-05" db="EMBL/GenBank/DDBJ databases">
        <authorList>
            <person name="Shinn P."/>
            <person name="Chen H."/>
            <person name="Cheuk R.F."/>
            <person name="Kim C.J."/>
            <person name="Carninci P."/>
            <person name="Hayashizaki Y."/>
            <person name="Ishida J."/>
            <person name="Kamiya A."/>
            <person name="Kawai J."/>
            <person name="Narusaka M."/>
            <person name="Sakurai T."/>
            <person name="Satou M."/>
            <person name="Seki M."/>
            <person name="Shinozaki K."/>
            <person name="Ecker J.R."/>
        </authorList>
    </citation>
    <scope>NUCLEOTIDE SEQUENCE [LARGE SCALE MRNA]</scope>
    <source>
        <strain>cv. Columbia</strain>
    </source>
</reference>
<reference key="5">
    <citation type="submission" date="2004-09" db="EMBL/GenBank/DDBJ databases">
        <title>Large-scale analysis of RIKEN Arabidopsis full-length (RAFL) cDNAs.</title>
        <authorList>
            <person name="Totoki Y."/>
            <person name="Seki M."/>
            <person name="Ishida J."/>
            <person name="Nakajima M."/>
            <person name="Enju A."/>
            <person name="Kamiya A."/>
            <person name="Narusaka M."/>
            <person name="Shin-i T."/>
            <person name="Nakagawa M."/>
            <person name="Sakamoto N."/>
            <person name="Oishi K."/>
            <person name="Kohara Y."/>
            <person name="Kobayashi M."/>
            <person name="Toyoda A."/>
            <person name="Sakaki Y."/>
            <person name="Sakurai T."/>
            <person name="Iida K."/>
            <person name="Akiyama K."/>
            <person name="Satou M."/>
            <person name="Toyoda T."/>
            <person name="Konagaya A."/>
            <person name="Carninci P."/>
            <person name="Kawai J."/>
            <person name="Hayashizaki Y."/>
            <person name="Shinozaki K."/>
        </authorList>
    </citation>
    <scope>NUCLEOTIDE SEQUENCE [LARGE SCALE MRNA] OF 10-244</scope>
    <source>
        <strain>cv. Columbia</strain>
    </source>
</reference>
<reference key="6">
    <citation type="journal article" date="2006" name="Plant Physiol.">
        <title>Genome-wide analysis of the ERF gene family in Arabidopsis and rice.</title>
        <authorList>
            <person name="Nakano T."/>
            <person name="Suzuki K."/>
            <person name="Fujimura T."/>
            <person name="Shinshi H."/>
        </authorList>
    </citation>
    <scope>GENE FAMILY</scope>
    <scope>NOMENCLATURE</scope>
</reference>
<keyword id="KW-0010">Activator</keyword>
<keyword id="KW-0238">DNA-binding</keyword>
<keyword id="KW-0936">Ethylene signaling pathway</keyword>
<keyword id="KW-0539">Nucleus</keyword>
<keyword id="KW-1185">Reference proteome</keyword>
<keyword id="KW-0804">Transcription</keyword>
<keyword id="KW-0805">Transcription regulation</keyword>
<comment type="function">
    <text evidence="1">Probably acts as a transcriptional activator. Binds to the GCC-box pathogenesis-related promoter element. May be involved in the regulation of gene expression by stress factors and by components of stress signal transduction pathways (By similarity).</text>
</comment>
<comment type="subcellular location">
    <subcellularLocation>
        <location evidence="4">Nucleus</location>
    </subcellularLocation>
</comment>
<comment type="similarity">
    <text evidence="4">Belongs to the AP2/ERF transcription factor family. ERF subfamily.</text>
</comment>
<dbReference type="EMBL" id="AY560843">
    <property type="protein sequence ID" value="AAT44910.1"/>
    <property type="molecule type" value="mRNA"/>
</dbReference>
<dbReference type="EMBL" id="AC010704">
    <property type="protein sequence ID" value="AAG51661.1"/>
    <property type="molecule type" value="Genomic_DNA"/>
</dbReference>
<dbReference type="EMBL" id="CP002684">
    <property type="protein sequence ID" value="AEE36003.1"/>
    <property type="molecule type" value="Genomic_DNA"/>
</dbReference>
<dbReference type="EMBL" id="BT012629">
    <property type="protein sequence ID" value="AAT06448.1"/>
    <property type="molecule type" value="mRNA"/>
</dbReference>
<dbReference type="EMBL" id="AK176224">
    <property type="protein sequence ID" value="BAD43987.1"/>
    <property type="molecule type" value="mRNA"/>
</dbReference>
<dbReference type="PIR" id="A96806">
    <property type="entry name" value="A96806"/>
</dbReference>
<dbReference type="RefSeq" id="NP_177887.1">
    <property type="nucleotide sequence ID" value="NM_106412.4"/>
</dbReference>
<dbReference type="SMR" id="Q9CAP4"/>
<dbReference type="FunCoup" id="Q9CAP4">
    <property type="interactions" value="17"/>
</dbReference>
<dbReference type="STRING" id="3702.Q9CAP4"/>
<dbReference type="iPTMnet" id="Q9CAP4"/>
<dbReference type="PaxDb" id="3702-AT1G77640.1"/>
<dbReference type="EnsemblPlants" id="AT1G77640.1">
    <property type="protein sequence ID" value="AT1G77640.1"/>
    <property type="gene ID" value="AT1G77640"/>
</dbReference>
<dbReference type="GeneID" id="844099"/>
<dbReference type="Gramene" id="AT1G77640.1">
    <property type="protein sequence ID" value="AT1G77640.1"/>
    <property type="gene ID" value="AT1G77640"/>
</dbReference>
<dbReference type="KEGG" id="ath:AT1G77640"/>
<dbReference type="Araport" id="AT1G77640"/>
<dbReference type="TAIR" id="AT1G77640"/>
<dbReference type="eggNOG" id="ENOG502RMWY">
    <property type="taxonomic scope" value="Eukaryota"/>
</dbReference>
<dbReference type="HOGENOM" id="CLU_063331_2_0_1"/>
<dbReference type="InParanoid" id="Q9CAP4"/>
<dbReference type="OMA" id="HQSCKNK"/>
<dbReference type="PhylomeDB" id="Q9CAP4"/>
<dbReference type="PRO" id="PR:Q9CAP4"/>
<dbReference type="Proteomes" id="UP000006548">
    <property type="component" value="Chromosome 1"/>
</dbReference>
<dbReference type="ExpressionAtlas" id="Q9CAP4">
    <property type="expression patterns" value="baseline and differential"/>
</dbReference>
<dbReference type="GO" id="GO:0005634">
    <property type="term" value="C:nucleus"/>
    <property type="evidence" value="ECO:0007669"/>
    <property type="project" value="UniProtKB-SubCell"/>
</dbReference>
<dbReference type="GO" id="GO:0003700">
    <property type="term" value="F:DNA-binding transcription factor activity"/>
    <property type="evidence" value="ECO:0000250"/>
    <property type="project" value="TAIR"/>
</dbReference>
<dbReference type="GO" id="GO:0000976">
    <property type="term" value="F:transcription cis-regulatory region binding"/>
    <property type="evidence" value="ECO:0000353"/>
    <property type="project" value="TAIR"/>
</dbReference>
<dbReference type="GO" id="GO:0009873">
    <property type="term" value="P:ethylene-activated signaling pathway"/>
    <property type="evidence" value="ECO:0007669"/>
    <property type="project" value="UniProtKB-KW"/>
</dbReference>
<dbReference type="CDD" id="cd00018">
    <property type="entry name" value="AP2"/>
    <property type="match status" value="1"/>
</dbReference>
<dbReference type="FunFam" id="3.30.730.10:FF:000006">
    <property type="entry name" value="ethylene-responsive transcription factor ERF014-like"/>
    <property type="match status" value="1"/>
</dbReference>
<dbReference type="Gene3D" id="3.30.730.10">
    <property type="entry name" value="AP2/ERF domain"/>
    <property type="match status" value="1"/>
</dbReference>
<dbReference type="InterPro" id="IPR001471">
    <property type="entry name" value="AP2/ERF_dom"/>
</dbReference>
<dbReference type="InterPro" id="IPR036955">
    <property type="entry name" value="AP2/ERF_dom_sf"/>
</dbReference>
<dbReference type="InterPro" id="IPR051032">
    <property type="entry name" value="AP2/ERF_TF_ERF_subfamily"/>
</dbReference>
<dbReference type="InterPro" id="IPR016177">
    <property type="entry name" value="DNA-bd_dom_sf"/>
</dbReference>
<dbReference type="PANTHER" id="PTHR31985:SF163">
    <property type="entry name" value="ETHYLENE-RESPONSIVE TRANSCRIPTION FACTOR ERF013"/>
    <property type="match status" value="1"/>
</dbReference>
<dbReference type="PANTHER" id="PTHR31985">
    <property type="entry name" value="ETHYLENE-RESPONSIVE TRANSCRIPTION FACTOR ERF042-RELATED"/>
    <property type="match status" value="1"/>
</dbReference>
<dbReference type="Pfam" id="PF00847">
    <property type="entry name" value="AP2"/>
    <property type="match status" value="1"/>
</dbReference>
<dbReference type="PRINTS" id="PR00367">
    <property type="entry name" value="ETHRSPELEMNT"/>
</dbReference>
<dbReference type="SMART" id="SM00380">
    <property type="entry name" value="AP2"/>
    <property type="match status" value="1"/>
</dbReference>
<dbReference type="SUPFAM" id="SSF54171">
    <property type="entry name" value="DNA-binding domain"/>
    <property type="match status" value="1"/>
</dbReference>
<dbReference type="PROSITE" id="PS51032">
    <property type="entry name" value="AP2_ERF"/>
    <property type="match status" value="1"/>
</dbReference>
<accession>Q9CAP4</accession>
<accession>Q67Z94</accession>